<keyword id="KW-0002">3D-structure</keyword>
<keyword id="KW-0007">Acetylation</keyword>
<keyword id="KW-0256">Endoplasmic reticulum</keyword>
<keyword id="KW-0449">Lipoprotein</keyword>
<keyword id="KW-0472">Membrane</keyword>
<keyword id="KW-0496">Mitochondrion</keyword>
<keyword id="KW-0564">Palmitate</keyword>
<keyword id="KW-0597">Phosphoprotein</keyword>
<keyword id="KW-1185">Reference proteome</keyword>
<keyword id="KW-0703">Sarcoplasmic reticulum</keyword>
<keyword id="KW-0812">Transmembrane</keyword>
<keyword id="KW-1133">Transmembrane helix</keyword>
<reference key="1">
    <citation type="journal article" date="1991" name="J. Biol. Chem.">
        <title>Structure of the rabbit phospholamban gene, cloning of the human cDNA, and assignment of the gene to human chromosome 6.</title>
        <authorList>
            <person name="Fujii J."/>
            <person name="Zarain-Herzberg A."/>
            <person name="Willard H.F."/>
            <person name="Tada M."/>
            <person name="Maclennan D.H."/>
        </authorList>
    </citation>
    <scope>NUCLEOTIDE SEQUENCE [GENOMIC DNA]</scope>
    <scope>TISSUE SPECIFICITY</scope>
</reference>
<reference key="2">
    <citation type="journal article" date="1988" name="FEBS Lett.">
        <title>Rabbit cardiac and slow-twitch muscle express the same phospholamban gene.</title>
        <authorList>
            <person name="Fujii J."/>
            <person name="Lytton J."/>
            <person name="Tada M."/>
            <person name="Maclennan D.H."/>
        </authorList>
    </citation>
    <scope>NUCLEOTIDE SEQUENCE [MRNA]</scope>
</reference>
<reference key="3">
    <citation type="journal article" date="2003" name="Biophys. J.">
        <title>NMR solution structure and topological orientation of monomeric phospholamban in dodecylphosphocholine micelles.</title>
        <authorList>
            <person name="Zamoon J."/>
            <person name="Mascioni A."/>
            <person name="Thomas D.D."/>
            <person name="Veglia G."/>
        </authorList>
    </citation>
    <scope>STRUCTURE BY NMR</scope>
</reference>
<reference key="4">
    <citation type="journal article" date="2005" name="Biochemistry">
        <title>Phospholamban pentamer quaternary conformation determined by in-gel fluorescence anisotropy.</title>
        <authorList>
            <person name="Robia S.L."/>
            <person name="Flohr N.C."/>
            <person name="Thomas D.D."/>
        </authorList>
    </citation>
    <scope>3D-STRUCTURE MODELING</scope>
</reference>
<evidence type="ECO:0000250" key="1">
    <source>
        <dbReference type="UniProtKB" id="A4IFH6"/>
    </source>
</evidence>
<evidence type="ECO:0000250" key="2">
    <source>
        <dbReference type="UniProtKB" id="P26678"/>
    </source>
</evidence>
<evidence type="ECO:0000250" key="3">
    <source>
        <dbReference type="UniProtKB" id="P61012"/>
    </source>
</evidence>
<evidence type="ECO:0000250" key="4">
    <source>
        <dbReference type="UniProtKB" id="P61014"/>
    </source>
</evidence>
<evidence type="ECO:0000255" key="5"/>
<evidence type="ECO:0000269" key="6">
    <source>
    </source>
</evidence>
<evidence type="ECO:0000303" key="7">
    <source>
    </source>
</evidence>
<evidence type="ECO:0000305" key="8"/>
<evidence type="ECO:0007829" key="9">
    <source>
        <dbReference type="PDB" id="1N7L"/>
    </source>
</evidence>
<proteinExistence type="evidence at protein level"/>
<gene>
    <name evidence="2" type="primary">PLN</name>
</gene>
<comment type="function">
    <text evidence="3 4">Reversibly inhibits the activity of ATP2A2/SERCA2 in cardiac sarcoplasmic reticulum by decreasing the apparent affinity of the ATPase for Ca(2+). Binds preferentially to the ATP-bound E1 conformational form of ATP2A2 which predominates at low Ca(2+) concentrations during the diastolic phase of the cardiac cycle. Inhibits ATP2A2 Ca(2+) affinity by disrupting its allosteric activation by ATP. Modulates the contractility of the heart muscle in response to physiological stimuli via its effects on ATP2A2. Modulates calcium re-uptake during muscle relaxation and plays an important role in calcium homeostasis in the heart muscle. The degree of ATP2A2 inhibition depends on the oligomeric state of PLN. ATP2A2 inhibition is alleviated by PLN phosphorylation. Also inhibits the activity of ATP2A3/SERCA3. Controls intracellular Ca(2+) levels in elongated spermatids and may play a role in germ cell differentiation. In the thalamic reticular nucleus of the brain, plays a role in the regulation of sleep patterns and executive functioning.</text>
</comment>
<comment type="subunit">
    <text evidence="2 4">Homopentamer. Can also form heterooligomers with other sarcoplasmic/endoplasmic reticulum calcium ATPase (SERCA) regulators ARLN, ERLN, SLN and STRIT1/DWORF. Monomer. Interacts with HAX1. Interacts as a monomer with ATP2A2; the interaction decreases ATP2A2 Ca(2+) affinity. Interacts with VMP1; VMP1 competes with PLN and SLN to prevent them from forming an inhibitory complex with ATP2A2. Interacts with S100A1 in a Ca(2+)-dependent manner.</text>
</comment>
<comment type="interaction">
    <interactant intactId="EBI-79236">
        <id>P61015</id>
    </interactant>
    <interactant intactId="EBI-79236">
        <id>P61015</id>
        <label>PLN</label>
    </interactant>
    <organismsDiffer>false</organismsDiffer>
    <experiments>8</experiments>
</comment>
<comment type="subcellular location">
    <subcellularLocation>
        <location evidence="2">Endoplasmic reticulum membrane</location>
        <topology evidence="5">Single-pass membrane protein</topology>
    </subcellularLocation>
    <subcellularLocation>
        <location evidence="2">Sarcoplasmic reticulum membrane</location>
        <topology evidence="5">Single-pass membrane protein</topology>
    </subcellularLocation>
    <subcellularLocation>
        <location evidence="1">Mitochondrion membrane</location>
        <topology evidence="5">Single-pass membrane protein</topology>
    </subcellularLocation>
    <subcellularLocation>
        <location evidence="4">Membrane</location>
        <topology evidence="5">Single-pass membrane protein</topology>
    </subcellularLocation>
    <text evidence="2">Colocalizes with HAX1 at the endoplasmic reticulum. Colocalizes with DMPK at the sarcoplasmic reticulum.</text>
</comment>
<comment type="tissue specificity">
    <text evidence="6">Heart.</text>
</comment>
<comment type="PTM">
    <text evidence="2">Phosphorylation by PKA abolishes the inhibition of ATP2A2-mediated calcium uptake. Phosphorylated at Thr-17 by CaMK2, and in response to beta-adrenergic stimulation. Phosphorylation by DMPK may stimulate sarcoplasmic reticulum calcium uptake in cardiomyocytes (By similarity).</text>
</comment>
<comment type="PTM">
    <text evidence="4">Palmitoylated by ZDHHC16, promoting formation of the homopentamer.</text>
</comment>
<comment type="PTM">
    <text evidence="4">In elongated spermatids, proteolytically cleaved by SPPL2C which modulates intracellular Ca(2+) homeostasis.</text>
</comment>
<comment type="similarity">
    <text evidence="8">Belongs to the phospholamban family.</text>
</comment>
<accession>P61015</accession>
<accession>P20006</accession>
<protein>
    <recommendedName>
        <fullName evidence="7">Phospholamban</fullName>
        <shortName>PLB</shortName>
    </recommendedName>
</protein>
<organism>
    <name type="scientific">Oryctolagus cuniculus</name>
    <name type="common">Rabbit</name>
    <dbReference type="NCBI Taxonomy" id="9986"/>
    <lineage>
        <taxon>Eukaryota</taxon>
        <taxon>Metazoa</taxon>
        <taxon>Chordata</taxon>
        <taxon>Craniata</taxon>
        <taxon>Vertebrata</taxon>
        <taxon>Euteleostomi</taxon>
        <taxon>Mammalia</taxon>
        <taxon>Eutheria</taxon>
        <taxon>Euarchontoglires</taxon>
        <taxon>Glires</taxon>
        <taxon>Lagomorpha</taxon>
        <taxon>Leporidae</taxon>
        <taxon>Oryctolagus</taxon>
    </lineage>
</organism>
<name>PPLA_RABIT</name>
<dbReference type="EMBL" id="M63600">
    <property type="status" value="NOT_ANNOTATED_CDS"/>
    <property type="molecule type" value="Genomic_DNA"/>
</dbReference>
<dbReference type="EMBL" id="M63601">
    <property type="protein sequence ID" value="AAA31445.1"/>
    <property type="molecule type" value="Genomic_DNA"/>
</dbReference>
<dbReference type="EMBL" id="Y00761">
    <property type="protein sequence ID" value="CAA68730.1"/>
    <property type="molecule type" value="mRNA"/>
</dbReference>
<dbReference type="PIR" id="B40424">
    <property type="entry name" value="B40424"/>
</dbReference>
<dbReference type="RefSeq" id="NP_001076090.1">
    <property type="nucleotide sequence ID" value="NM_001082621.2"/>
</dbReference>
<dbReference type="PDB" id="1N7L">
    <property type="method" value="NMR"/>
    <property type="chains" value="A=1-52"/>
</dbReference>
<dbReference type="PDB" id="2KB7">
    <property type="method" value="Other"/>
    <property type="chains" value="P=1-52"/>
</dbReference>
<dbReference type="PDB" id="2KYV">
    <property type="method" value="Other"/>
    <property type="chains" value="A/B/C/D/E=1-52"/>
</dbReference>
<dbReference type="PDB" id="2LPF">
    <property type="method" value="NMR"/>
    <property type="chains" value="A=1-52"/>
</dbReference>
<dbReference type="PDB" id="2M3B">
    <property type="method" value="Other"/>
    <property type="chains" value="A/B/C/D/E=1-52"/>
</dbReference>
<dbReference type="PDBsum" id="1N7L"/>
<dbReference type="PDBsum" id="2KB7"/>
<dbReference type="PDBsum" id="2KYV"/>
<dbReference type="PDBsum" id="2LPF"/>
<dbReference type="PDBsum" id="2M3B"/>
<dbReference type="BMRB" id="P61015"/>
<dbReference type="SMR" id="P61015"/>
<dbReference type="DIP" id="DIP-31022N"/>
<dbReference type="FunCoup" id="P61015">
    <property type="interactions" value="42"/>
</dbReference>
<dbReference type="IntAct" id="P61015">
    <property type="interactions" value="6"/>
</dbReference>
<dbReference type="STRING" id="9986.ENSOCUP00000011917"/>
<dbReference type="iPTMnet" id="P61015"/>
<dbReference type="PaxDb" id="9986-ENSOCUP00000011917"/>
<dbReference type="Ensembl" id="ENSOCUT00000013855.3">
    <property type="protein sequence ID" value="ENSOCUP00000011917.3"/>
    <property type="gene ID" value="ENSOCUG00000013865.3"/>
</dbReference>
<dbReference type="GeneID" id="100009299"/>
<dbReference type="KEGG" id="ocu:100009299"/>
<dbReference type="CTD" id="5350"/>
<dbReference type="eggNOG" id="ENOG502S97F">
    <property type="taxonomic scope" value="Eukaryota"/>
</dbReference>
<dbReference type="GeneTree" id="ENSGT00390000002403"/>
<dbReference type="InParanoid" id="P61015"/>
<dbReference type="OMA" id="QHTMRSA"/>
<dbReference type="EvolutionaryTrace" id="P61015"/>
<dbReference type="Proteomes" id="UP000001811">
    <property type="component" value="Chromosome 12"/>
</dbReference>
<dbReference type="Bgee" id="ENSOCUG00000013865">
    <property type="expression patterns" value="Expressed in heart and 17 other cell types or tissues"/>
</dbReference>
<dbReference type="ExpressionAtlas" id="P61015">
    <property type="expression patterns" value="baseline"/>
</dbReference>
<dbReference type="GO" id="GO:0090534">
    <property type="term" value="C:calcium ion-transporting ATPase complex"/>
    <property type="evidence" value="ECO:0007669"/>
    <property type="project" value="Ensembl"/>
</dbReference>
<dbReference type="GO" id="GO:0005783">
    <property type="term" value="C:endoplasmic reticulum"/>
    <property type="evidence" value="ECO:0000314"/>
    <property type="project" value="BHF-UCL"/>
</dbReference>
<dbReference type="GO" id="GO:0005789">
    <property type="term" value="C:endoplasmic reticulum membrane"/>
    <property type="evidence" value="ECO:0000250"/>
    <property type="project" value="UniProtKB"/>
</dbReference>
<dbReference type="GO" id="GO:0031966">
    <property type="term" value="C:mitochondrial membrane"/>
    <property type="evidence" value="ECO:0007669"/>
    <property type="project" value="UniProtKB-SubCell"/>
</dbReference>
<dbReference type="GO" id="GO:0048471">
    <property type="term" value="C:perinuclear region of cytoplasm"/>
    <property type="evidence" value="ECO:0000314"/>
    <property type="project" value="BHF-UCL"/>
</dbReference>
<dbReference type="GO" id="GO:1990629">
    <property type="term" value="C:phospholamban complex"/>
    <property type="evidence" value="ECO:0007669"/>
    <property type="project" value="Ensembl"/>
</dbReference>
<dbReference type="GO" id="GO:0033017">
    <property type="term" value="C:sarcoplasmic reticulum membrane"/>
    <property type="evidence" value="ECO:0000250"/>
    <property type="project" value="UniProtKB"/>
</dbReference>
<dbReference type="GO" id="GO:0051117">
    <property type="term" value="F:ATPase binding"/>
    <property type="evidence" value="ECO:0000314"/>
    <property type="project" value="BHF-UCL"/>
</dbReference>
<dbReference type="GO" id="GO:0042030">
    <property type="term" value="F:ATPase inhibitor activity"/>
    <property type="evidence" value="ECO:0000305"/>
    <property type="project" value="BHF-UCL"/>
</dbReference>
<dbReference type="GO" id="GO:0004857">
    <property type="term" value="F:enzyme inhibitor activity"/>
    <property type="evidence" value="ECO:0000314"/>
    <property type="project" value="BHF-UCL"/>
</dbReference>
<dbReference type="GO" id="GO:0042802">
    <property type="term" value="F:identical protein binding"/>
    <property type="evidence" value="ECO:0000353"/>
    <property type="project" value="IntAct"/>
</dbReference>
<dbReference type="GO" id="GO:0042803">
    <property type="term" value="F:protein homodimerization activity"/>
    <property type="evidence" value="ECO:0000250"/>
    <property type="project" value="UniProtKB"/>
</dbReference>
<dbReference type="GO" id="GO:0001675">
    <property type="term" value="P:acrosome assembly"/>
    <property type="evidence" value="ECO:0000250"/>
    <property type="project" value="UniProtKB"/>
</dbReference>
<dbReference type="GO" id="GO:0086023">
    <property type="term" value="P:adenylate cyclase-activating adrenergic receptor signaling pathway involved in heart process"/>
    <property type="evidence" value="ECO:0007669"/>
    <property type="project" value="Ensembl"/>
</dbReference>
<dbReference type="GO" id="GO:0048738">
    <property type="term" value="P:cardiac muscle tissue development"/>
    <property type="evidence" value="ECO:0007669"/>
    <property type="project" value="Ensembl"/>
</dbReference>
<dbReference type="GO" id="GO:0050802">
    <property type="term" value="P:circadian sleep/wake cycle, sleep"/>
    <property type="evidence" value="ECO:0000250"/>
    <property type="project" value="UniProtKB"/>
</dbReference>
<dbReference type="GO" id="GO:0006874">
    <property type="term" value="P:intracellular calcium ion homeostasis"/>
    <property type="evidence" value="ECO:0000250"/>
    <property type="project" value="UniProtKB"/>
</dbReference>
<dbReference type="GO" id="GO:0045475">
    <property type="term" value="P:locomotor rhythm"/>
    <property type="evidence" value="ECO:0000250"/>
    <property type="project" value="UniProtKB"/>
</dbReference>
<dbReference type="GO" id="GO:0046716">
    <property type="term" value="P:muscle cell cellular homeostasis"/>
    <property type="evidence" value="ECO:0007669"/>
    <property type="project" value="Ensembl"/>
</dbReference>
<dbReference type="GO" id="GO:1901895">
    <property type="term" value="P:negative regulation of ATPase-coupled calcium transmembrane transporter activity"/>
    <property type="evidence" value="ECO:0000250"/>
    <property type="project" value="UniProtKB"/>
</dbReference>
<dbReference type="GO" id="GO:1901877">
    <property type="term" value="P:negative regulation of calcium ion binding"/>
    <property type="evidence" value="ECO:0000314"/>
    <property type="project" value="BHF-UCL"/>
</dbReference>
<dbReference type="GO" id="GO:0090281">
    <property type="term" value="P:negative regulation of calcium ion import"/>
    <property type="evidence" value="ECO:0000314"/>
    <property type="project" value="BHF-UCL"/>
</dbReference>
<dbReference type="GO" id="GO:1902081">
    <property type="term" value="P:negative regulation of calcium ion import into sarcoplasmic reticulum"/>
    <property type="evidence" value="ECO:0000314"/>
    <property type="project" value="BHF-UCL"/>
</dbReference>
<dbReference type="GO" id="GO:0010459">
    <property type="term" value="P:negative regulation of heart rate"/>
    <property type="evidence" value="ECO:0007669"/>
    <property type="project" value="Ensembl"/>
</dbReference>
<dbReference type="GO" id="GO:0007219">
    <property type="term" value="P:Notch signaling pathway"/>
    <property type="evidence" value="ECO:0007669"/>
    <property type="project" value="Ensembl"/>
</dbReference>
<dbReference type="GO" id="GO:0051924">
    <property type="term" value="P:regulation of calcium ion transport"/>
    <property type="evidence" value="ECO:0000314"/>
    <property type="project" value="UniProtKB"/>
</dbReference>
<dbReference type="GO" id="GO:0086004">
    <property type="term" value="P:regulation of cardiac muscle cell contraction"/>
    <property type="evidence" value="ECO:0007669"/>
    <property type="project" value="Ensembl"/>
</dbReference>
<dbReference type="GO" id="GO:0010882">
    <property type="term" value="P:regulation of cardiac muscle contraction by calcium ion signaling"/>
    <property type="evidence" value="ECO:0000314"/>
    <property type="project" value="BHF-UCL"/>
</dbReference>
<dbReference type="GO" id="GO:0010881">
    <property type="term" value="P:regulation of cardiac muscle contraction by regulation of the release of sequestered calcium ion"/>
    <property type="evidence" value="ECO:0007669"/>
    <property type="project" value="Ensembl"/>
</dbReference>
<dbReference type="GO" id="GO:1901077">
    <property type="term" value="P:regulation of relaxation of muscle"/>
    <property type="evidence" value="ECO:0007669"/>
    <property type="project" value="Ensembl"/>
</dbReference>
<dbReference type="GO" id="GO:0086092">
    <property type="term" value="P:regulation of the force of heart contraction by cardiac conduction"/>
    <property type="evidence" value="ECO:0007669"/>
    <property type="project" value="Ensembl"/>
</dbReference>
<dbReference type="GO" id="GO:0008542">
    <property type="term" value="P:visual learning"/>
    <property type="evidence" value="ECO:0000250"/>
    <property type="project" value="UniProtKB"/>
</dbReference>
<dbReference type="CDD" id="cd20250">
    <property type="entry name" value="Phospholamban"/>
    <property type="match status" value="1"/>
</dbReference>
<dbReference type="FunFam" id="1.20.5.290:FF:000001">
    <property type="entry name" value="Cardiac phospholamban"/>
    <property type="match status" value="1"/>
</dbReference>
<dbReference type="Gene3D" id="1.20.5.290">
    <property type="entry name" value="Phospholamban"/>
    <property type="match status" value="1"/>
</dbReference>
<dbReference type="InterPro" id="IPR005984">
    <property type="entry name" value="PLB"/>
</dbReference>
<dbReference type="NCBIfam" id="TIGR01294">
    <property type="entry name" value="P_lamban"/>
    <property type="match status" value="1"/>
</dbReference>
<dbReference type="PANTHER" id="PTHR21194">
    <property type="entry name" value="CARDIAC PHOSPHOLAMBAN"/>
    <property type="match status" value="1"/>
</dbReference>
<dbReference type="PANTHER" id="PTHR21194:SF1">
    <property type="entry name" value="CARDIAC PHOSPHOLAMBAN"/>
    <property type="match status" value="1"/>
</dbReference>
<dbReference type="Pfam" id="PF04272">
    <property type="entry name" value="Phospholamban"/>
    <property type="match status" value="1"/>
</dbReference>
<dbReference type="PIRSF" id="PIRSF001665">
    <property type="entry name" value="PLB"/>
    <property type="match status" value="1"/>
</dbReference>
<feature type="chain" id="PRO_0000191247" description="Phospholamban">
    <location>
        <begin position="1"/>
        <end position="52"/>
    </location>
</feature>
<feature type="topological domain" description="Cytoplasmic" evidence="5">
    <location>
        <begin position="1"/>
        <end position="31"/>
    </location>
</feature>
<feature type="transmembrane region" description="Helical" evidence="5">
    <location>
        <begin position="32"/>
        <end position="52"/>
    </location>
</feature>
<feature type="modified residue" description="N-acetylmethionine" evidence="1">
    <location>
        <position position="1"/>
    </location>
</feature>
<feature type="modified residue" description="Phosphoserine; by PKA and DMPK" evidence="3">
    <location>
        <position position="16"/>
    </location>
</feature>
<feature type="modified residue" description="Phosphothreonine; by CaMK2" evidence="3">
    <location>
        <position position="17"/>
    </location>
</feature>
<feature type="lipid moiety-binding region" description="S-palmitoyl cysteine" evidence="4">
    <location>
        <position position="36"/>
    </location>
</feature>
<feature type="helix" evidence="9">
    <location>
        <begin position="2"/>
        <end position="16"/>
    </location>
</feature>
<feature type="helix" evidence="9">
    <location>
        <begin position="22"/>
        <end position="50"/>
    </location>
</feature>
<sequence length="52" mass="6095">MEKVQYLTRSAIRRASTIEMPQQARQNLQNLFINFCLILICLLLICIIVMLL</sequence>